<name>HMDH1_SOLTU</name>
<sequence length="596" mass="63917">MDVRRRPVKPLYTSKDASAGEPLKQQEVSSPKASDALPLPLYLTNGLFFTMFFSVMYFLLVRWREKIRNSIPLHVVTLSELLAMVSLIASVIYLLGFFGIGFVQSFVSRSNSDSWDIEDENAEQLIIEEDSRRGPCAAATTLGCVVPPPPVRKIAPMVPQQPAKVALSQTEKPSPIIMPALSEDDEEIIQSVVQGKTPSYSLESKLGDCMRAASIRKEALQRITGKSLEGLPLEGFDYSSILGQCCEMPVGYVQIPVGIAGPLLLDGREYSVPMATTEGCLVASTNRGCKAIFVSGGADSVLLRDGMTRAPVVRFTTAKRAAELKFFVEDPLNFETLSLMFNKSSRFARLQGIQCAIAGKNLYITFSCSTGDAMGMNMVSKGVQNVLDYLQSEYPDMDVIGISGNFCSDKKPAAVNWIEGRGKSVVCEAIIKEEVVKKVLKTEVAALVELNMLKNLTGSAMAGALGGFNAHASNIVSAVYLATGQDPAQNVESSHCITMMEAVNDGKDLHVSVTMPSIEVGTVGGGTQLASQSACLNLLGVKGANRDAPGSNARLLATIVAGSVLAGELSLMSAISAGQLVKSHMKYNRSIKDISK</sequence>
<gene>
    <name type="primary">HMG1</name>
</gene>
<organism>
    <name type="scientific">Solanum tuberosum</name>
    <name type="common">Potato</name>
    <dbReference type="NCBI Taxonomy" id="4113"/>
    <lineage>
        <taxon>Eukaryota</taxon>
        <taxon>Viridiplantae</taxon>
        <taxon>Streptophyta</taxon>
        <taxon>Embryophyta</taxon>
        <taxon>Tracheophyta</taxon>
        <taxon>Spermatophyta</taxon>
        <taxon>Magnoliopsida</taxon>
        <taxon>eudicotyledons</taxon>
        <taxon>Gunneridae</taxon>
        <taxon>Pentapetalae</taxon>
        <taxon>asterids</taxon>
        <taxon>lamiids</taxon>
        <taxon>Solanales</taxon>
        <taxon>Solanaceae</taxon>
        <taxon>Solanoideae</taxon>
        <taxon>Solaneae</taxon>
        <taxon>Solanum</taxon>
    </lineage>
</organism>
<reference key="1">
    <citation type="journal article" date="1992" name="Plant Cell">
        <title>Differential induction and suppression of potato 3-hydroxy-3-methylglutaryl coenzyme A reductase genes in response to Phytophthora infestans and to its elicitor arachidonic acid.</title>
        <authorList>
            <person name="Choi D."/>
            <person name="Ward B.L."/>
            <person name="Bostock R.M."/>
        </authorList>
    </citation>
    <scope>NUCLEOTIDE SEQUENCE [MRNA]</scope>
    <source>
        <strain>cv. Kennebec</strain>
        <tissue>Tuber</tissue>
    </source>
</reference>
<comment type="function">
    <text>Catalyzes the synthesis of mevalonate. The specific precursor of all isoprenoid compounds present in plants.</text>
</comment>
<comment type="catalytic activity">
    <reaction evidence="3">
        <text>(R)-mevalonate + 2 NADP(+) + CoA = (3S)-3-hydroxy-3-methylglutaryl-CoA + 2 NADPH + 2 H(+)</text>
        <dbReference type="Rhea" id="RHEA:15989"/>
        <dbReference type="ChEBI" id="CHEBI:15378"/>
        <dbReference type="ChEBI" id="CHEBI:36464"/>
        <dbReference type="ChEBI" id="CHEBI:43074"/>
        <dbReference type="ChEBI" id="CHEBI:57287"/>
        <dbReference type="ChEBI" id="CHEBI:57783"/>
        <dbReference type="ChEBI" id="CHEBI:58349"/>
        <dbReference type="EC" id="1.1.1.34"/>
    </reaction>
</comment>
<comment type="pathway">
    <text>Metabolic intermediate biosynthesis; (R)-mevalonate biosynthesis; (R)-mevalonate from acetyl-CoA: step 3/3.</text>
</comment>
<comment type="subcellular location">
    <subcellularLocation>
        <location>Endoplasmic reticulum membrane</location>
        <topology>Multi-pass membrane protein</topology>
    </subcellularLocation>
</comment>
<comment type="tissue specificity">
    <text>Expressed in flower primordia and anthers.</text>
</comment>
<comment type="induction">
    <text>Induced by wounding. This enhancement is greatly reduced by treatment with arachidonic acid or after inoculation with the fungal pathogen, P.infestans.</text>
</comment>
<comment type="similarity">
    <text evidence="5">Belongs to the HMG-CoA reductase family.</text>
</comment>
<evidence type="ECO:0000250" key="1"/>
<evidence type="ECO:0000255" key="2"/>
<evidence type="ECO:0000255" key="3">
    <source>
        <dbReference type="PROSITE-ProRule" id="PRU10003"/>
    </source>
</evidence>
<evidence type="ECO:0000256" key="4">
    <source>
        <dbReference type="SAM" id="MobiDB-lite"/>
    </source>
</evidence>
<evidence type="ECO:0000305" key="5"/>
<protein>
    <recommendedName>
        <fullName>3-hydroxy-3-methylglutaryl-coenzyme A reductase 1</fullName>
        <shortName>HMG-CoA reductase 1</shortName>
        <shortName>HMGR</shortName>
        <shortName>HMGR1</shortName>
        <ecNumber>1.1.1.34</ecNumber>
    </recommendedName>
</protein>
<keyword id="KW-0256">Endoplasmic reticulum</keyword>
<keyword id="KW-0325">Glycoprotein</keyword>
<keyword id="KW-0414">Isoprene biosynthesis</keyword>
<keyword id="KW-0472">Membrane</keyword>
<keyword id="KW-0521">NADP</keyword>
<keyword id="KW-0560">Oxidoreductase</keyword>
<keyword id="KW-1185">Reference proteome</keyword>
<keyword id="KW-0812">Transmembrane</keyword>
<keyword id="KW-1133">Transmembrane helix</keyword>
<proteinExistence type="evidence at transcript level"/>
<accession>P48020</accession>
<feature type="chain" id="PRO_0000114448" description="3-hydroxy-3-methylglutaryl-coenzyme A reductase 1">
    <location>
        <begin position="1"/>
        <end position="596"/>
    </location>
</feature>
<feature type="transmembrane region" description="Helical" evidence="2">
    <location>
        <begin position="41"/>
        <end position="61"/>
    </location>
</feature>
<feature type="transmembrane region" description="Helical" evidence="2">
    <location>
        <begin position="83"/>
        <end position="103"/>
    </location>
</feature>
<feature type="region of interest" description="Disordered" evidence="4">
    <location>
        <begin position="1"/>
        <end position="29"/>
    </location>
</feature>
<feature type="region of interest" description="Linker" evidence="1">
    <location>
        <begin position="104"/>
        <end position="183"/>
    </location>
</feature>
<feature type="region of interest" description="Catalytic" evidence="1">
    <location>
        <begin position="184"/>
        <end position="596"/>
    </location>
</feature>
<feature type="active site" description="Charge relay system" evidence="1">
    <location>
        <position position="278"/>
    </location>
</feature>
<feature type="active site" description="Charge relay system" evidence="1">
    <location>
        <position position="410"/>
    </location>
</feature>
<feature type="active site" description="Charge relay system" evidence="1">
    <location>
        <position position="486"/>
    </location>
</feature>
<feature type="active site" description="Proton donor" evidence="3">
    <location>
        <position position="584"/>
    </location>
</feature>
<feature type="glycosylation site" description="N-linked (GlcNAc...) asparagine" evidence="2">
    <location>
        <position position="342"/>
    </location>
</feature>
<feature type="glycosylation site" description="N-linked (GlcNAc...) asparagine" evidence="2">
    <location>
        <position position="455"/>
    </location>
</feature>
<feature type="glycosylation site" description="N-linked (GlcNAc...) asparagine" evidence="2">
    <location>
        <position position="588"/>
    </location>
</feature>
<dbReference type="EC" id="1.1.1.34"/>
<dbReference type="EMBL" id="L01400">
    <property type="protein sequence ID" value="AAA93498.1"/>
    <property type="molecule type" value="mRNA"/>
</dbReference>
<dbReference type="PIR" id="S59944">
    <property type="entry name" value="S59944"/>
</dbReference>
<dbReference type="RefSeq" id="NP_001275461.1">
    <property type="nucleotide sequence ID" value="NM_001288532.1"/>
</dbReference>
<dbReference type="SMR" id="P48020"/>
<dbReference type="STRING" id="4113.P48020"/>
<dbReference type="GlyCosmos" id="P48020">
    <property type="glycosylation" value="3 sites, No reported glycans"/>
</dbReference>
<dbReference type="PaxDb" id="4113-PGSC0003DMT400035542"/>
<dbReference type="GeneID" id="102577654"/>
<dbReference type="KEGG" id="sot:102577654"/>
<dbReference type="eggNOG" id="KOG2480">
    <property type="taxonomic scope" value="Eukaryota"/>
</dbReference>
<dbReference type="InParanoid" id="P48020"/>
<dbReference type="OrthoDB" id="310654at2759"/>
<dbReference type="UniPathway" id="UPA00058">
    <property type="reaction ID" value="UER00103"/>
</dbReference>
<dbReference type="Proteomes" id="UP000011115">
    <property type="component" value="Unassembled WGS sequence"/>
</dbReference>
<dbReference type="ExpressionAtlas" id="P48020">
    <property type="expression patterns" value="baseline and differential"/>
</dbReference>
<dbReference type="GO" id="GO:0005789">
    <property type="term" value="C:endoplasmic reticulum membrane"/>
    <property type="evidence" value="ECO:0000318"/>
    <property type="project" value="GO_Central"/>
</dbReference>
<dbReference type="GO" id="GO:0005778">
    <property type="term" value="C:peroxisomal membrane"/>
    <property type="evidence" value="ECO:0000318"/>
    <property type="project" value="GO_Central"/>
</dbReference>
<dbReference type="GO" id="GO:0004420">
    <property type="term" value="F:hydroxymethylglutaryl-CoA reductase (NADPH) activity"/>
    <property type="evidence" value="ECO:0000318"/>
    <property type="project" value="GO_Central"/>
</dbReference>
<dbReference type="GO" id="GO:0015936">
    <property type="term" value="P:coenzyme A metabolic process"/>
    <property type="evidence" value="ECO:0007669"/>
    <property type="project" value="InterPro"/>
</dbReference>
<dbReference type="GO" id="GO:0008299">
    <property type="term" value="P:isoprenoid biosynthetic process"/>
    <property type="evidence" value="ECO:0000318"/>
    <property type="project" value="GO_Central"/>
</dbReference>
<dbReference type="GO" id="GO:0016126">
    <property type="term" value="P:sterol biosynthetic process"/>
    <property type="evidence" value="ECO:0000318"/>
    <property type="project" value="GO_Central"/>
</dbReference>
<dbReference type="CDD" id="cd00643">
    <property type="entry name" value="HMG-CoA_reductase_classI"/>
    <property type="match status" value="1"/>
</dbReference>
<dbReference type="FunFam" id="1.10.3270.10:FF:000002">
    <property type="entry name" value="3-hydroxy-3-methylglutaryl coenzyme A reductase"/>
    <property type="match status" value="1"/>
</dbReference>
<dbReference type="FunFam" id="3.30.70.420:FF:000001">
    <property type="entry name" value="3-hydroxy-3-methylglutaryl coenzyme A reductase"/>
    <property type="match status" value="1"/>
</dbReference>
<dbReference type="FunFam" id="3.90.770.10:FF:000001">
    <property type="entry name" value="3-hydroxy-3-methylglutaryl coenzyme A reductase"/>
    <property type="match status" value="1"/>
</dbReference>
<dbReference type="Gene3D" id="3.90.770.10">
    <property type="entry name" value="3-hydroxy-3-methylglutaryl-coenzyme A Reductase, Chain A, domain 2"/>
    <property type="match status" value="1"/>
</dbReference>
<dbReference type="Gene3D" id="1.10.3270.10">
    <property type="entry name" value="HMGR, N-terminal domain"/>
    <property type="match status" value="1"/>
</dbReference>
<dbReference type="Gene3D" id="3.30.70.420">
    <property type="entry name" value="Hydroxymethylglutaryl-CoA reductase, class I/II, NAD/NADP-binding domain"/>
    <property type="match status" value="1"/>
</dbReference>
<dbReference type="InterPro" id="IPR002202">
    <property type="entry name" value="HMG_CoA_Rdtase"/>
</dbReference>
<dbReference type="InterPro" id="IPR023074">
    <property type="entry name" value="HMG_CoA_Rdtase_cat_sf"/>
</dbReference>
<dbReference type="InterPro" id="IPR023076">
    <property type="entry name" value="HMG_CoA_Rdtase_CS"/>
</dbReference>
<dbReference type="InterPro" id="IPR004554">
    <property type="entry name" value="HMG_CoA_Rdtase_eu_arc"/>
</dbReference>
<dbReference type="InterPro" id="IPR023282">
    <property type="entry name" value="HMG_CoA_Rdtase_N"/>
</dbReference>
<dbReference type="InterPro" id="IPR009023">
    <property type="entry name" value="HMG_CoA_Rdtase_NAD(P)-bd_sf"/>
</dbReference>
<dbReference type="InterPro" id="IPR009029">
    <property type="entry name" value="HMG_CoA_Rdtase_sub-bd_dom_sf"/>
</dbReference>
<dbReference type="NCBIfam" id="TIGR00533">
    <property type="entry name" value="HMG_CoA_R_NADP"/>
    <property type="match status" value="1"/>
</dbReference>
<dbReference type="PANTHER" id="PTHR10572">
    <property type="entry name" value="3-HYDROXY-3-METHYLGLUTARYL-COENZYME A REDUCTASE"/>
    <property type="match status" value="1"/>
</dbReference>
<dbReference type="PANTHER" id="PTHR10572:SF56">
    <property type="entry name" value="3-HYDROXY-3-METHYLGLUTARYL-COENZYME A REDUCTASE 1"/>
    <property type="match status" value="1"/>
</dbReference>
<dbReference type="Pfam" id="PF00368">
    <property type="entry name" value="HMG-CoA_red"/>
    <property type="match status" value="1"/>
</dbReference>
<dbReference type="PRINTS" id="PR00071">
    <property type="entry name" value="HMGCOARDTASE"/>
</dbReference>
<dbReference type="SUPFAM" id="SSF55035">
    <property type="entry name" value="NAD-binding domain of HMG-CoA reductase"/>
    <property type="match status" value="1"/>
</dbReference>
<dbReference type="SUPFAM" id="SSF56542">
    <property type="entry name" value="Substrate-binding domain of HMG-CoA reductase"/>
    <property type="match status" value="1"/>
</dbReference>
<dbReference type="PROSITE" id="PS00318">
    <property type="entry name" value="HMG_COA_REDUCTASE_2"/>
    <property type="match status" value="1"/>
</dbReference>
<dbReference type="PROSITE" id="PS01192">
    <property type="entry name" value="HMG_COA_REDUCTASE_3"/>
    <property type="match status" value="1"/>
</dbReference>
<dbReference type="PROSITE" id="PS50065">
    <property type="entry name" value="HMG_COA_REDUCTASE_4"/>
    <property type="match status" value="1"/>
</dbReference>